<evidence type="ECO:0000255" key="1">
    <source>
        <dbReference type="HAMAP-Rule" id="MF_00708"/>
    </source>
</evidence>
<accession>B5BKG5</accession>
<name>FRDC_SALPK</name>
<reference key="1">
    <citation type="journal article" date="2009" name="BMC Genomics">
        <title>Pseudogene accumulation in the evolutionary histories of Salmonella enterica serovars Paratyphi A and Typhi.</title>
        <authorList>
            <person name="Holt K.E."/>
            <person name="Thomson N.R."/>
            <person name="Wain J."/>
            <person name="Langridge G.C."/>
            <person name="Hasan R."/>
            <person name="Bhutta Z.A."/>
            <person name="Quail M.A."/>
            <person name="Norbertczak H."/>
            <person name="Walker D."/>
            <person name="Simmonds M."/>
            <person name="White B."/>
            <person name="Bason N."/>
            <person name="Mungall K."/>
            <person name="Dougan G."/>
            <person name="Parkhill J."/>
        </authorList>
    </citation>
    <scope>NUCLEOTIDE SEQUENCE [LARGE SCALE GENOMIC DNA]</scope>
    <source>
        <strain>AKU_12601</strain>
    </source>
</reference>
<sequence>MTTKRKPYVRPMTSTWWKKLPFYRFYMLREGTAVPAVWFSIELIFGLFALKHGAESWMGFVGFLQNPVVVILNLITLAAALLHTKTWFELAPKAANIIVKDEKMGPEPIIKGLWVVTAVVTVVILYVALFW</sequence>
<comment type="function">
    <text evidence="1">Two distinct, membrane-bound, FAD-containing enzymes are responsible for the catalysis of fumarate and succinate interconversion; fumarate reductase is used in anaerobic growth, and succinate dehydrogenase is used in aerobic growth. Anchors the catalytic components of the fumarate reductase complex to the cell inner membrane, binds quinones.</text>
</comment>
<comment type="subunit">
    <text evidence="1">Part of an enzyme complex containing four subunits: a flavoprotein (FrdA), an iron-sulfur protein (FrdB), and two hydrophobic anchor proteins (FrdC and FrdD).</text>
</comment>
<comment type="subcellular location">
    <subcellularLocation>
        <location evidence="1">Cell inner membrane</location>
        <topology evidence="1">Multi-pass membrane protein</topology>
    </subcellularLocation>
</comment>
<comment type="similarity">
    <text evidence="1">Belongs to the FrdC family.</text>
</comment>
<gene>
    <name evidence="1" type="primary">frdC</name>
    <name type="ordered locus">SSPA3862</name>
</gene>
<protein>
    <recommendedName>
        <fullName evidence="1">Fumarate reductase subunit C</fullName>
    </recommendedName>
    <alternativeName>
        <fullName evidence="1">Fumarate reductase 15 kDa hydrophobic protein</fullName>
    </alternativeName>
    <alternativeName>
        <fullName evidence="1">Quinol-fumarate reductase subunit C</fullName>
        <shortName evidence="1">QFR subunit C</shortName>
    </alternativeName>
</protein>
<organism>
    <name type="scientific">Salmonella paratyphi A (strain AKU_12601)</name>
    <dbReference type="NCBI Taxonomy" id="554290"/>
    <lineage>
        <taxon>Bacteria</taxon>
        <taxon>Pseudomonadati</taxon>
        <taxon>Pseudomonadota</taxon>
        <taxon>Gammaproteobacteria</taxon>
        <taxon>Enterobacterales</taxon>
        <taxon>Enterobacteriaceae</taxon>
        <taxon>Salmonella</taxon>
    </lineage>
</organism>
<proteinExistence type="inferred from homology"/>
<feature type="chain" id="PRO_1000132386" description="Fumarate reductase subunit C">
    <location>
        <begin position="1"/>
        <end position="131"/>
    </location>
</feature>
<feature type="transmembrane region" description="Helical" evidence="1">
    <location>
        <begin position="30"/>
        <end position="50"/>
    </location>
</feature>
<feature type="transmembrane region" description="Helical" evidence="1">
    <location>
        <begin position="57"/>
        <end position="77"/>
    </location>
</feature>
<feature type="transmembrane region" description="Helical" evidence="1">
    <location>
        <begin position="109"/>
        <end position="129"/>
    </location>
</feature>
<keyword id="KW-0997">Cell inner membrane</keyword>
<keyword id="KW-1003">Cell membrane</keyword>
<keyword id="KW-0472">Membrane</keyword>
<keyword id="KW-0812">Transmembrane</keyword>
<keyword id="KW-1133">Transmembrane helix</keyword>
<dbReference type="EMBL" id="FM200053">
    <property type="protein sequence ID" value="CAR62148.1"/>
    <property type="molecule type" value="Genomic_DNA"/>
</dbReference>
<dbReference type="RefSeq" id="WP_000208749.1">
    <property type="nucleotide sequence ID" value="NC_011147.1"/>
</dbReference>
<dbReference type="SMR" id="B5BKG5"/>
<dbReference type="KEGG" id="sek:SSPA3862"/>
<dbReference type="HOGENOM" id="CLU_156492_0_0_6"/>
<dbReference type="Proteomes" id="UP000001869">
    <property type="component" value="Chromosome"/>
</dbReference>
<dbReference type="GO" id="GO:0045283">
    <property type="term" value="C:fumarate reductase complex"/>
    <property type="evidence" value="ECO:0007669"/>
    <property type="project" value="UniProtKB-UniRule"/>
</dbReference>
<dbReference type="GO" id="GO:0005886">
    <property type="term" value="C:plasma membrane"/>
    <property type="evidence" value="ECO:0007669"/>
    <property type="project" value="UniProtKB-SubCell"/>
</dbReference>
<dbReference type="GO" id="GO:0000104">
    <property type="term" value="F:succinate dehydrogenase activity"/>
    <property type="evidence" value="ECO:0007669"/>
    <property type="project" value="UniProtKB-UniRule"/>
</dbReference>
<dbReference type="CDD" id="cd00546">
    <property type="entry name" value="QFR_TypeD_subunitC"/>
    <property type="match status" value="1"/>
</dbReference>
<dbReference type="Gene3D" id="1.20.1300.10">
    <property type="entry name" value="Fumarate reductase/succinate dehydrogenase, transmembrane subunit"/>
    <property type="match status" value="1"/>
</dbReference>
<dbReference type="HAMAP" id="MF_00708">
    <property type="entry name" value="Fumarate_red_C"/>
    <property type="match status" value="1"/>
</dbReference>
<dbReference type="InterPro" id="IPR003510">
    <property type="entry name" value="Fumarate_red_C"/>
</dbReference>
<dbReference type="InterPro" id="IPR034804">
    <property type="entry name" value="SQR/QFR_C/D"/>
</dbReference>
<dbReference type="NCBIfam" id="NF003445">
    <property type="entry name" value="PRK04987.1"/>
    <property type="match status" value="1"/>
</dbReference>
<dbReference type="Pfam" id="PF02300">
    <property type="entry name" value="Fumarate_red_C"/>
    <property type="match status" value="1"/>
</dbReference>
<dbReference type="PIRSF" id="PIRSF000180">
    <property type="entry name" value="FrdC"/>
    <property type="match status" value="1"/>
</dbReference>
<dbReference type="SUPFAM" id="SSF81343">
    <property type="entry name" value="Fumarate reductase respiratory complex transmembrane subunits"/>
    <property type="match status" value="1"/>
</dbReference>